<feature type="chain" id="PRO_1000187757" description="Ubiquinone/menaquinone biosynthesis C-methyltransferase UbiE">
    <location>
        <begin position="1"/>
        <end position="251"/>
    </location>
</feature>
<feature type="binding site" evidence="1">
    <location>
        <position position="74"/>
    </location>
    <ligand>
        <name>S-adenosyl-L-methionine</name>
        <dbReference type="ChEBI" id="CHEBI:59789"/>
    </ligand>
</feature>
<feature type="binding site" evidence="1">
    <location>
        <position position="95"/>
    </location>
    <ligand>
        <name>S-adenosyl-L-methionine</name>
        <dbReference type="ChEBI" id="CHEBI:59789"/>
    </ligand>
</feature>
<feature type="binding site" evidence="1">
    <location>
        <begin position="123"/>
        <end position="124"/>
    </location>
    <ligand>
        <name>S-adenosyl-L-methionine</name>
        <dbReference type="ChEBI" id="CHEBI:59789"/>
    </ligand>
</feature>
<feature type="binding site" evidence="1">
    <location>
        <position position="140"/>
    </location>
    <ligand>
        <name>S-adenosyl-L-methionine</name>
        <dbReference type="ChEBI" id="CHEBI:59789"/>
    </ligand>
</feature>
<accession>B5YY82</accession>
<gene>
    <name evidence="1" type="primary">ubiE</name>
    <name type="ordered locus">ECH74115_5274</name>
</gene>
<reference key="1">
    <citation type="journal article" date="2011" name="Proc. Natl. Acad. Sci. U.S.A.">
        <title>Genomic anatomy of Escherichia coli O157:H7 outbreaks.</title>
        <authorList>
            <person name="Eppinger M."/>
            <person name="Mammel M.K."/>
            <person name="Leclerc J.E."/>
            <person name="Ravel J."/>
            <person name="Cebula T.A."/>
        </authorList>
    </citation>
    <scope>NUCLEOTIDE SEQUENCE [LARGE SCALE GENOMIC DNA]</scope>
    <source>
        <strain>EC4115 / EHEC</strain>
    </source>
</reference>
<sequence length="251" mass="28073">MVDKSQETTHFGFQTVAKEQKADMVAHVFHSVASKYDVMNDLMSFGIHRLWKRFTIDCSGVRRGQTVLDLAGGTGDLTAKFSRLVGETGKVVLADINESMLKMGREKLRNIGVIGNVEYVQANAEALPFPDNTFDCITISFGLRNVTDKDKALRSMYRVLKPGGRLLVLEFSKPIIEPLSKAYDAYSFHVLPRIGSLVANDADSYRYLAESIRMHPDQDTLKAMMQDAGFESVDYYNLTAGVVALHRGYKF</sequence>
<evidence type="ECO:0000255" key="1">
    <source>
        <dbReference type="HAMAP-Rule" id="MF_01813"/>
    </source>
</evidence>
<comment type="function">
    <text evidence="1">Methyltransferase required for the conversion of demethylmenaquinol (DMKH2) to menaquinol (MKH2) and the conversion of 2-polyprenyl-6-methoxy-1,4-benzoquinol (DDMQH2) to 2-polyprenyl-3-methyl-6-methoxy-1,4-benzoquinol (DMQH2).</text>
</comment>
<comment type="catalytic activity">
    <reaction evidence="1">
        <text>a 2-demethylmenaquinol + S-adenosyl-L-methionine = a menaquinol + S-adenosyl-L-homocysteine + H(+)</text>
        <dbReference type="Rhea" id="RHEA:42640"/>
        <dbReference type="Rhea" id="RHEA-COMP:9539"/>
        <dbReference type="Rhea" id="RHEA-COMP:9563"/>
        <dbReference type="ChEBI" id="CHEBI:15378"/>
        <dbReference type="ChEBI" id="CHEBI:18151"/>
        <dbReference type="ChEBI" id="CHEBI:55437"/>
        <dbReference type="ChEBI" id="CHEBI:57856"/>
        <dbReference type="ChEBI" id="CHEBI:59789"/>
        <dbReference type="EC" id="2.1.1.163"/>
    </reaction>
</comment>
<comment type="catalytic activity">
    <reaction evidence="1">
        <text>a 2-methoxy-6-(all-trans-polyprenyl)benzene-1,4-diol + S-adenosyl-L-methionine = a 5-methoxy-2-methyl-3-(all-trans-polyprenyl)benzene-1,4-diol + S-adenosyl-L-homocysteine + H(+)</text>
        <dbReference type="Rhea" id="RHEA:28286"/>
        <dbReference type="Rhea" id="RHEA-COMP:10858"/>
        <dbReference type="Rhea" id="RHEA-COMP:10859"/>
        <dbReference type="ChEBI" id="CHEBI:15378"/>
        <dbReference type="ChEBI" id="CHEBI:57856"/>
        <dbReference type="ChEBI" id="CHEBI:59789"/>
        <dbReference type="ChEBI" id="CHEBI:84166"/>
        <dbReference type="ChEBI" id="CHEBI:84167"/>
        <dbReference type="EC" id="2.1.1.201"/>
    </reaction>
</comment>
<comment type="pathway">
    <text evidence="1">Quinol/quinone metabolism; menaquinone biosynthesis; menaquinol from 1,4-dihydroxy-2-naphthoate: step 2/2.</text>
</comment>
<comment type="pathway">
    <text evidence="1">Cofactor biosynthesis; ubiquinone biosynthesis.</text>
</comment>
<comment type="similarity">
    <text evidence="1">Belongs to the class I-like SAM-binding methyltransferase superfamily. MenG/UbiE family.</text>
</comment>
<protein>
    <recommendedName>
        <fullName evidence="1">Ubiquinone/menaquinone biosynthesis C-methyltransferase UbiE</fullName>
        <ecNumber evidence="1">2.1.1.163</ecNumber>
        <ecNumber evidence="1">2.1.1.201</ecNumber>
    </recommendedName>
    <alternativeName>
        <fullName evidence="1">2-methoxy-6-polyprenyl-1,4-benzoquinol methylase</fullName>
    </alternativeName>
    <alternativeName>
        <fullName evidence="1">Demethylmenaquinone methyltransferase</fullName>
    </alternativeName>
</protein>
<organism>
    <name type="scientific">Escherichia coli O157:H7 (strain EC4115 / EHEC)</name>
    <dbReference type="NCBI Taxonomy" id="444450"/>
    <lineage>
        <taxon>Bacteria</taxon>
        <taxon>Pseudomonadati</taxon>
        <taxon>Pseudomonadota</taxon>
        <taxon>Gammaproteobacteria</taxon>
        <taxon>Enterobacterales</taxon>
        <taxon>Enterobacteriaceae</taxon>
        <taxon>Escherichia</taxon>
    </lineage>
</organism>
<dbReference type="EC" id="2.1.1.163" evidence="1"/>
<dbReference type="EC" id="2.1.1.201" evidence="1"/>
<dbReference type="EMBL" id="CP001164">
    <property type="protein sequence ID" value="ACI39276.1"/>
    <property type="molecule type" value="Genomic_DNA"/>
</dbReference>
<dbReference type="RefSeq" id="WP_000227958.1">
    <property type="nucleotide sequence ID" value="NC_011353.1"/>
</dbReference>
<dbReference type="SMR" id="B5YY82"/>
<dbReference type="GeneID" id="93778102"/>
<dbReference type="KEGG" id="ecf:ECH74115_5274"/>
<dbReference type="HOGENOM" id="CLU_037990_0_0_6"/>
<dbReference type="UniPathway" id="UPA00079">
    <property type="reaction ID" value="UER00169"/>
</dbReference>
<dbReference type="UniPathway" id="UPA00232"/>
<dbReference type="GO" id="GO:0008425">
    <property type="term" value="F:2-methoxy-6-polyprenyl-1,4-benzoquinol methyltransferase activity"/>
    <property type="evidence" value="ECO:0007669"/>
    <property type="project" value="UniProtKB-UniRule"/>
</dbReference>
<dbReference type="GO" id="GO:0043770">
    <property type="term" value="F:demethylmenaquinone methyltransferase activity"/>
    <property type="evidence" value="ECO:0007669"/>
    <property type="project" value="UniProtKB-UniRule"/>
</dbReference>
<dbReference type="GO" id="GO:0009060">
    <property type="term" value="P:aerobic respiration"/>
    <property type="evidence" value="ECO:0007669"/>
    <property type="project" value="UniProtKB-UniRule"/>
</dbReference>
<dbReference type="GO" id="GO:0009234">
    <property type="term" value="P:menaquinone biosynthetic process"/>
    <property type="evidence" value="ECO:0007669"/>
    <property type="project" value="UniProtKB-UniRule"/>
</dbReference>
<dbReference type="GO" id="GO:0032259">
    <property type="term" value="P:methylation"/>
    <property type="evidence" value="ECO:0007669"/>
    <property type="project" value="UniProtKB-KW"/>
</dbReference>
<dbReference type="CDD" id="cd02440">
    <property type="entry name" value="AdoMet_MTases"/>
    <property type="match status" value="1"/>
</dbReference>
<dbReference type="FunFam" id="3.40.50.150:FF:000014">
    <property type="entry name" value="Ubiquinone/menaquinone biosynthesis C-methyltransferase UbiE"/>
    <property type="match status" value="1"/>
</dbReference>
<dbReference type="Gene3D" id="3.40.50.150">
    <property type="entry name" value="Vaccinia Virus protein VP39"/>
    <property type="match status" value="1"/>
</dbReference>
<dbReference type="HAMAP" id="MF_01813">
    <property type="entry name" value="MenG_UbiE_methyltr"/>
    <property type="match status" value="1"/>
</dbReference>
<dbReference type="InterPro" id="IPR029063">
    <property type="entry name" value="SAM-dependent_MTases_sf"/>
</dbReference>
<dbReference type="InterPro" id="IPR004033">
    <property type="entry name" value="UbiE/COQ5_MeTrFase"/>
</dbReference>
<dbReference type="InterPro" id="IPR023576">
    <property type="entry name" value="UbiE/COQ5_MeTrFase_CS"/>
</dbReference>
<dbReference type="NCBIfam" id="TIGR01934">
    <property type="entry name" value="MenG_MenH_UbiE"/>
    <property type="match status" value="1"/>
</dbReference>
<dbReference type="NCBIfam" id="NF001240">
    <property type="entry name" value="PRK00216.1-1"/>
    <property type="match status" value="1"/>
</dbReference>
<dbReference type="NCBIfam" id="NF001242">
    <property type="entry name" value="PRK00216.1-3"/>
    <property type="match status" value="1"/>
</dbReference>
<dbReference type="NCBIfam" id="NF001244">
    <property type="entry name" value="PRK00216.1-5"/>
    <property type="match status" value="1"/>
</dbReference>
<dbReference type="PANTHER" id="PTHR43591:SF24">
    <property type="entry name" value="2-METHOXY-6-POLYPRENYL-1,4-BENZOQUINOL METHYLASE, MITOCHONDRIAL"/>
    <property type="match status" value="1"/>
</dbReference>
<dbReference type="PANTHER" id="PTHR43591">
    <property type="entry name" value="METHYLTRANSFERASE"/>
    <property type="match status" value="1"/>
</dbReference>
<dbReference type="Pfam" id="PF01209">
    <property type="entry name" value="Ubie_methyltran"/>
    <property type="match status" value="1"/>
</dbReference>
<dbReference type="SUPFAM" id="SSF53335">
    <property type="entry name" value="S-adenosyl-L-methionine-dependent methyltransferases"/>
    <property type="match status" value="1"/>
</dbReference>
<dbReference type="PROSITE" id="PS51608">
    <property type="entry name" value="SAM_MT_UBIE"/>
    <property type="match status" value="1"/>
</dbReference>
<dbReference type="PROSITE" id="PS01183">
    <property type="entry name" value="UBIE_1"/>
    <property type="match status" value="1"/>
</dbReference>
<dbReference type="PROSITE" id="PS01184">
    <property type="entry name" value="UBIE_2"/>
    <property type="match status" value="1"/>
</dbReference>
<proteinExistence type="inferred from homology"/>
<name>UBIE_ECO5E</name>
<keyword id="KW-0474">Menaquinone biosynthesis</keyword>
<keyword id="KW-0489">Methyltransferase</keyword>
<keyword id="KW-0949">S-adenosyl-L-methionine</keyword>
<keyword id="KW-0808">Transferase</keyword>
<keyword id="KW-0831">Ubiquinone biosynthesis</keyword>